<keyword id="KW-0496">Mitochondrion</keyword>
<keyword id="KW-1185">Reference proteome</keyword>
<keyword id="KW-0808">Transferase</keyword>
<keyword id="KW-0809">Transit peptide</keyword>
<keyword id="KW-0816">Tricarboxylic acid cycle</keyword>
<feature type="transit peptide" description="Mitochondrion" evidence="2">
    <location>
        <begin position="1"/>
        <end status="unknown"/>
    </location>
</feature>
<feature type="chain" id="PRO_0000291604" description="Probable citrate synthase, mitochondrial">
    <location>
        <begin status="unknown"/>
        <end position="470"/>
    </location>
</feature>
<feature type="active site" evidence="3">
    <location>
        <position position="297"/>
    </location>
</feature>
<feature type="active site" evidence="3">
    <location>
        <position position="351"/>
    </location>
</feature>
<feature type="active site" evidence="3">
    <location>
        <position position="406"/>
    </location>
</feature>
<comment type="catalytic activity">
    <reaction evidence="3">
        <text>oxaloacetate + acetyl-CoA + H2O = citrate + CoA + H(+)</text>
        <dbReference type="Rhea" id="RHEA:16845"/>
        <dbReference type="ChEBI" id="CHEBI:15377"/>
        <dbReference type="ChEBI" id="CHEBI:15378"/>
        <dbReference type="ChEBI" id="CHEBI:16452"/>
        <dbReference type="ChEBI" id="CHEBI:16947"/>
        <dbReference type="ChEBI" id="CHEBI:57287"/>
        <dbReference type="ChEBI" id="CHEBI:57288"/>
        <dbReference type="EC" id="2.3.3.16"/>
    </reaction>
</comment>
<comment type="pathway">
    <text>Carbohydrate metabolism; tricarboxylic acid cycle; isocitrate from oxaloacetate: step 1/2.</text>
</comment>
<comment type="subunit">
    <text evidence="1">Homodimer.</text>
</comment>
<comment type="subcellular location">
    <subcellularLocation>
        <location evidence="1">Mitochondrion matrix</location>
    </subcellularLocation>
</comment>
<comment type="miscellaneous">
    <text>Citrate synthase is found in nearly all cells capable of oxidative metabolism.</text>
</comment>
<comment type="similarity">
    <text evidence="4">Belongs to the citrate synthase family.</text>
</comment>
<gene>
    <name type="ORF">LbrM18_V2.0760</name>
    <name type="ORF">LbrM_18_0760</name>
</gene>
<protein>
    <recommendedName>
        <fullName>Probable citrate synthase, mitochondrial</fullName>
        <ecNumber>2.3.3.16</ecNumber>
    </recommendedName>
</protein>
<dbReference type="EC" id="2.3.3.16"/>
<dbReference type="EMBL" id="FR798992">
    <property type="protein sequence ID" value="CAM38050.1"/>
    <property type="molecule type" value="Genomic_DNA"/>
</dbReference>
<dbReference type="RefSeq" id="XP_001564000.1">
    <property type="nucleotide sequence ID" value="XM_001563950.1"/>
</dbReference>
<dbReference type="SMR" id="A4H9H8"/>
<dbReference type="FunCoup" id="A4H9H8">
    <property type="interactions" value="293"/>
</dbReference>
<dbReference type="STRING" id="5660.A4H9H8"/>
<dbReference type="GeneID" id="5414535"/>
<dbReference type="KEGG" id="lbz:LBRM_18_0760"/>
<dbReference type="VEuPathDB" id="TriTrypDB:LbrM.18.0760"/>
<dbReference type="InParanoid" id="A4H9H8"/>
<dbReference type="OMA" id="VLEWLFK"/>
<dbReference type="UniPathway" id="UPA00223">
    <property type="reaction ID" value="UER00717"/>
</dbReference>
<dbReference type="Proteomes" id="UP000007258">
    <property type="component" value="Chromosome 18"/>
</dbReference>
<dbReference type="GO" id="GO:0005759">
    <property type="term" value="C:mitochondrial matrix"/>
    <property type="evidence" value="ECO:0007669"/>
    <property type="project" value="UniProtKB-SubCell"/>
</dbReference>
<dbReference type="GO" id="GO:0004108">
    <property type="term" value="F:citrate (Si)-synthase activity"/>
    <property type="evidence" value="ECO:0007669"/>
    <property type="project" value="TreeGrafter"/>
</dbReference>
<dbReference type="GO" id="GO:0005975">
    <property type="term" value="P:carbohydrate metabolic process"/>
    <property type="evidence" value="ECO:0007669"/>
    <property type="project" value="TreeGrafter"/>
</dbReference>
<dbReference type="GO" id="GO:0006099">
    <property type="term" value="P:tricarboxylic acid cycle"/>
    <property type="evidence" value="ECO:0007669"/>
    <property type="project" value="UniProtKB-UniPathway"/>
</dbReference>
<dbReference type="FunFam" id="1.10.230.10:FF:000001">
    <property type="entry name" value="Citrate synthase"/>
    <property type="match status" value="1"/>
</dbReference>
<dbReference type="Gene3D" id="1.10.580.10">
    <property type="entry name" value="Citrate Synthase, domain 1"/>
    <property type="match status" value="1"/>
</dbReference>
<dbReference type="Gene3D" id="1.10.230.10">
    <property type="entry name" value="Cytochrome P450-Terp, domain 2"/>
    <property type="match status" value="1"/>
</dbReference>
<dbReference type="InterPro" id="IPR016142">
    <property type="entry name" value="Citrate_synth-like_lrg_a-sub"/>
</dbReference>
<dbReference type="InterPro" id="IPR016143">
    <property type="entry name" value="Citrate_synth-like_sm_a-sub"/>
</dbReference>
<dbReference type="InterPro" id="IPR002020">
    <property type="entry name" value="Citrate_synthase"/>
</dbReference>
<dbReference type="InterPro" id="IPR019810">
    <property type="entry name" value="Citrate_synthase_AS"/>
</dbReference>
<dbReference type="InterPro" id="IPR036969">
    <property type="entry name" value="Citrate_synthase_sf"/>
</dbReference>
<dbReference type="NCBIfam" id="NF007128">
    <property type="entry name" value="PRK09569.1"/>
    <property type="match status" value="1"/>
</dbReference>
<dbReference type="PANTHER" id="PTHR11739">
    <property type="entry name" value="CITRATE SYNTHASE"/>
    <property type="match status" value="1"/>
</dbReference>
<dbReference type="PANTHER" id="PTHR11739:SF8">
    <property type="entry name" value="CITRATE SYNTHASE, MITOCHONDRIAL"/>
    <property type="match status" value="1"/>
</dbReference>
<dbReference type="Pfam" id="PF00285">
    <property type="entry name" value="Citrate_synt"/>
    <property type="match status" value="1"/>
</dbReference>
<dbReference type="PRINTS" id="PR00143">
    <property type="entry name" value="CITRTSNTHASE"/>
</dbReference>
<dbReference type="SUPFAM" id="SSF48256">
    <property type="entry name" value="Citrate synthase"/>
    <property type="match status" value="1"/>
</dbReference>
<dbReference type="PROSITE" id="PS00480">
    <property type="entry name" value="CITRATE_SYNTHASE"/>
    <property type="match status" value="1"/>
</dbReference>
<reference key="1">
    <citation type="journal article" date="2007" name="Nat. Genet.">
        <title>Comparative genomic analysis of three Leishmania species that cause diverse human disease.</title>
        <authorList>
            <person name="Peacock C.S."/>
            <person name="Seeger K."/>
            <person name="Harris D."/>
            <person name="Murphy L."/>
            <person name="Ruiz J.C."/>
            <person name="Quail M.A."/>
            <person name="Peters N."/>
            <person name="Adlem E."/>
            <person name="Tivey A."/>
            <person name="Aslett M."/>
            <person name="Kerhornou A."/>
            <person name="Ivens A."/>
            <person name="Fraser A."/>
            <person name="Rajandream M.-A."/>
            <person name="Carver T."/>
            <person name="Norbertczak H."/>
            <person name="Chillingworth T."/>
            <person name="Hance Z."/>
            <person name="Jagels K."/>
            <person name="Moule S."/>
            <person name="Ormond D."/>
            <person name="Rutter S."/>
            <person name="Sqaures R."/>
            <person name="Whitehead S."/>
            <person name="Rabbinowitsch E."/>
            <person name="Arrowsmith C."/>
            <person name="White B."/>
            <person name="Thurston S."/>
            <person name="Bringaud F."/>
            <person name="Baldauf S.L."/>
            <person name="Faulconbridge A."/>
            <person name="Jeffares D."/>
            <person name="Depledge D.P."/>
            <person name="Oyola S.O."/>
            <person name="Hilley J.D."/>
            <person name="Brito L.O."/>
            <person name="Tosi L.R.O."/>
            <person name="Barrell B."/>
            <person name="Cruz A.K."/>
            <person name="Mottram J.C."/>
            <person name="Smith D.F."/>
            <person name="Berriman M."/>
        </authorList>
    </citation>
    <scope>NUCLEOTIDE SEQUENCE [LARGE SCALE GENOMIC DNA]</scope>
    <source>
        <strain>MHOM/BR/75/M2904</strain>
    </source>
</reference>
<accession>A4H9H8</accession>
<sequence length="470" mass="51957">MRAARCSIIRGAAGLRMASSVMSEMKEQMLKRSKVEKQTISELRKKHGDVKLSDASIDAAYCGMRGITGLVYEPSLLDPVEGIRFRNRTIPECQEVLPKAPNGCETLPEAMFWLLMTGEVPTAEQARALNAELHRRADPVAIAAAQKAIAALPASTHPMTAFSVGVLALQTYSKFAAAYATGKSNKTTYWEYALEDSLDMLARTPAVAAMIYNRVTKGRAEVAASSNSELDWAANFSNMLGFKDNEFWECMRLYLSIHVDHEGGNVSAHTTTLVASALSDPYLAFSAGLNGLAGPLHGLANQEVLKYLLSMQDRVKADGVNVCDEAALEVALTKYTWELLNSGQVVPGYGHAVLRKVDPRYTCLRNFCLRHHFEDDLFKLINIIYKIMPGILTEHGKTKNPYPNVDAHSGVLLQHYGLTEQDYYTVLFGLSRQMGVMAGVVWDRLQGRPLERPKSITTEMLAKKYLCTPR</sequence>
<proteinExistence type="inferred from homology"/>
<organism>
    <name type="scientific">Leishmania braziliensis</name>
    <dbReference type="NCBI Taxonomy" id="5660"/>
    <lineage>
        <taxon>Eukaryota</taxon>
        <taxon>Discoba</taxon>
        <taxon>Euglenozoa</taxon>
        <taxon>Kinetoplastea</taxon>
        <taxon>Metakinetoplastina</taxon>
        <taxon>Trypanosomatida</taxon>
        <taxon>Trypanosomatidae</taxon>
        <taxon>Leishmaniinae</taxon>
        <taxon>Leishmania</taxon>
        <taxon>Leishmania braziliensis species complex</taxon>
    </lineage>
</organism>
<name>CISY_LEIBR</name>
<evidence type="ECO:0000250" key="1"/>
<evidence type="ECO:0000255" key="2"/>
<evidence type="ECO:0000255" key="3">
    <source>
        <dbReference type="PROSITE-ProRule" id="PRU10117"/>
    </source>
</evidence>
<evidence type="ECO:0000305" key="4"/>